<feature type="chain" id="PRO_0000165494" description="Holliday junction branch migration complex subunit RuvB">
    <location>
        <begin position="1"/>
        <end position="343"/>
    </location>
</feature>
<feature type="region of interest" description="Large ATPase domain (RuvB-L)" evidence="1">
    <location>
        <begin position="1"/>
        <end position="185"/>
    </location>
</feature>
<feature type="region of interest" description="Small ATPAse domain (RuvB-S)" evidence="1">
    <location>
        <begin position="186"/>
        <end position="256"/>
    </location>
</feature>
<feature type="region of interest" description="Head domain (RuvB-H)" evidence="1">
    <location>
        <begin position="259"/>
        <end position="343"/>
    </location>
</feature>
<feature type="binding site" evidence="1">
    <location>
        <position position="24"/>
    </location>
    <ligand>
        <name>ATP</name>
        <dbReference type="ChEBI" id="CHEBI:30616"/>
    </ligand>
</feature>
<feature type="binding site" evidence="1">
    <location>
        <position position="25"/>
    </location>
    <ligand>
        <name>ATP</name>
        <dbReference type="ChEBI" id="CHEBI:30616"/>
    </ligand>
</feature>
<feature type="binding site" evidence="1">
    <location>
        <position position="66"/>
    </location>
    <ligand>
        <name>ATP</name>
        <dbReference type="ChEBI" id="CHEBI:30616"/>
    </ligand>
</feature>
<feature type="binding site" evidence="1">
    <location>
        <position position="69"/>
    </location>
    <ligand>
        <name>ATP</name>
        <dbReference type="ChEBI" id="CHEBI:30616"/>
    </ligand>
</feature>
<feature type="binding site" evidence="1">
    <location>
        <position position="70"/>
    </location>
    <ligand>
        <name>ATP</name>
        <dbReference type="ChEBI" id="CHEBI:30616"/>
    </ligand>
</feature>
<feature type="binding site" evidence="1">
    <location>
        <position position="70"/>
    </location>
    <ligand>
        <name>Mg(2+)</name>
        <dbReference type="ChEBI" id="CHEBI:18420"/>
    </ligand>
</feature>
<feature type="binding site" evidence="1">
    <location>
        <position position="71"/>
    </location>
    <ligand>
        <name>ATP</name>
        <dbReference type="ChEBI" id="CHEBI:30616"/>
    </ligand>
</feature>
<feature type="binding site" evidence="1">
    <location>
        <begin position="132"/>
        <end position="134"/>
    </location>
    <ligand>
        <name>ATP</name>
        <dbReference type="ChEBI" id="CHEBI:30616"/>
    </ligand>
</feature>
<feature type="binding site" evidence="1">
    <location>
        <position position="175"/>
    </location>
    <ligand>
        <name>ATP</name>
        <dbReference type="ChEBI" id="CHEBI:30616"/>
    </ligand>
</feature>
<feature type="binding site" evidence="1">
    <location>
        <position position="185"/>
    </location>
    <ligand>
        <name>ATP</name>
        <dbReference type="ChEBI" id="CHEBI:30616"/>
    </ligand>
</feature>
<feature type="binding site" evidence="1">
    <location>
        <position position="222"/>
    </location>
    <ligand>
        <name>ATP</name>
        <dbReference type="ChEBI" id="CHEBI:30616"/>
    </ligand>
</feature>
<feature type="binding site" evidence="1">
    <location>
        <position position="314"/>
    </location>
    <ligand>
        <name>DNA</name>
        <dbReference type="ChEBI" id="CHEBI:16991"/>
    </ligand>
</feature>
<feature type="binding site" evidence="1">
    <location>
        <position position="319"/>
    </location>
    <ligand>
        <name>DNA</name>
        <dbReference type="ChEBI" id="CHEBI:16991"/>
    </ligand>
</feature>
<keyword id="KW-0067">ATP-binding</keyword>
<keyword id="KW-0963">Cytoplasm</keyword>
<keyword id="KW-0227">DNA damage</keyword>
<keyword id="KW-0233">DNA recombination</keyword>
<keyword id="KW-0234">DNA repair</keyword>
<keyword id="KW-0238">DNA-binding</keyword>
<keyword id="KW-0378">Hydrolase</keyword>
<keyword id="KW-0547">Nucleotide-binding</keyword>
<keyword id="KW-1185">Reference proteome</keyword>
<gene>
    <name evidence="1" type="primary">ruvB</name>
    <name type="ordered locus">BT_3285</name>
</gene>
<reference key="1">
    <citation type="journal article" date="2003" name="Science">
        <title>A genomic view of the human-Bacteroides thetaiotaomicron symbiosis.</title>
        <authorList>
            <person name="Xu J."/>
            <person name="Bjursell M.K."/>
            <person name="Himrod J."/>
            <person name="Deng S."/>
            <person name="Carmichael L.K."/>
            <person name="Chiang H.C."/>
            <person name="Hooper L.V."/>
            <person name="Gordon J.I."/>
        </authorList>
    </citation>
    <scope>NUCLEOTIDE SEQUENCE [LARGE SCALE GENOMIC DNA]</scope>
    <source>
        <strain>ATCC 29148 / DSM 2079 / JCM 5827 / CCUG 10774 / NCTC 10582 / VPI-5482 / E50</strain>
    </source>
</reference>
<accession>Q8A2M0</accession>
<comment type="function">
    <text evidence="1">The RuvA-RuvB-RuvC complex processes Holliday junction (HJ) DNA during genetic recombination and DNA repair, while the RuvA-RuvB complex plays an important role in the rescue of blocked DNA replication forks via replication fork reversal (RFR). RuvA specifically binds to HJ cruciform DNA, conferring on it an open structure. The RuvB hexamer acts as an ATP-dependent pump, pulling dsDNA into and through the RuvAB complex. RuvB forms 2 homohexamers on either side of HJ DNA bound by 1 or 2 RuvA tetramers; 4 subunits per hexamer contact DNA at a time. Coordinated motions by a converter formed by DNA-disengaged RuvB subunits stimulates ATP hydrolysis and nucleotide exchange. Immobilization of the converter enables RuvB to convert the ATP-contained energy into a lever motion, pulling 2 nucleotides of DNA out of the RuvA tetramer per ATP hydrolyzed, thus driving DNA branch migration. The RuvB motors rotate together with the DNA substrate, which together with the progressing nucleotide cycle form the mechanistic basis for DNA recombination by continuous HJ branch migration. Branch migration allows RuvC to scan DNA until it finds its consensus sequence, where it cleaves and resolves cruciform DNA.</text>
</comment>
<comment type="catalytic activity">
    <reaction evidence="1">
        <text>ATP + H2O = ADP + phosphate + H(+)</text>
        <dbReference type="Rhea" id="RHEA:13065"/>
        <dbReference type="ChEBI" id="CHEBI:15377"/>
        <dbReference type="ChEBI" id="CHEBI:15378"/>
        <dbReference type="ChEBI" id="CHEBI:30616"/>
        <dbReference type="ChEBI" id="CHEBI:43474"/>
        <dbReference type="ChEBI" id="CHEBI:456216"/>
    </reaction>
</comment>
<comment type="subunit">
    <text evidence="1">Homohexamer. Forms an RuvA(8)-RuvB(12)-Holliday junction (HJ) complex. HJ DNA is sandwiched between 2 RuvA tetramers; dsDNA enters through RuvA and exits via RuvB. An RuvB hexamer assembles on each DNA strand where it exits the tetramer. Each RuvB hexamer is contacted by two RuvA subunits (via domain III) on 2 adjacent RuvB subunits; this complex drives branch migration. In the full resolvosome a probable DNA-RuvA(4)-RuvB(12)-RuvC(2) complex forms which resolves the HJ.</text>
</comment>
<comment type="subcellular location">
    <subcellularLocation>
        <location evidence="1">Cytoplasm</location>
    </subcellularLocation>
</comment>
<comment type="domain">
    <text evidence="1">Has 3 domains, the large (RuvB-L) and small ATPase (RuvB-S) domains and the C-terminal head (RuvB-H) domain. The head domain binds DNA, while the ATPase domains jointly bind ATP, ADP or are empty depending on the state of the subunit in the translocation cycle. During a single DNA translocation step the structure of each domain remains the same, but their relative positions change.</text>
</comment>
<comment type="similarity">
    <text evidence="1">Belongs to the RuvB family.</text>
</comment>
<sequence>MEQEDFNIREHQLTSRERDFENALRPLSFEDFSGQDKVVENLRIFVKAARLRGEALDHVLLHGPPGLGKTTLSNIIANELGVGFKVTSGPVLDKPGDLAGVLTSLEPNDVLFIDEIHRLSPVVEEYLYSAMEDYRIDIMIDKGPSARSIQIDLNPFTLVGATTRSGLLTAPLRARFGINLHLEYYDDDILSNIIRRSASILDVPCSVRAASEIASRSRGTPRIANALLRRVRDFAQVKGSGSIDTEIAQFALEALNIDKYGLDEIDNKILCTIIDKFKGGPVGLTTIATALGEDAGTIEEVYEPFLIKEGFMKRTPRGREVTELAYKHLGRSLYSSQKTLFND</sequence>
<evidence type="ECO:0000255" key="1">
    <source>
        <dbReference type="HAMAP-Rule" id="MF_00016"/>
    </source>
</evidence>
<proteinExistence type="inferred from homology"/>
<name>RUVB_BACTN</name>
<dbReference type="EC" id="3.6.4.-" evidence="1"/>
<dbReference type="EMBL" id="AE015928">
    <property type="protein sequence ID" value="AAO78391.1"/>
    <property type="molecule type" value="Genomic_DNA"/>
</dbReference>
<dbReference type="RefSeq" id="NP_812197.1">
    <property type="nucleotide sequence ID" value="NC_004663.1"/>
</dbReference>
<dbReference type="RefSeq" id="WP_008762892.1">
    <property type="nucleotide sequence ID" value="NZ_UYXG01000003.1"/>
</dbReference>
<dbReference type="SMR" id="Q8A2M0"/>
<dbReference type="FunCoup" id="Q8A2M0">
    <property type="interactions" value="261"/>
</dbReference>
<dbReference type="STRING" id="226186.BT_3285"/>
<dbReference type="PaxDb" id="226186-BT_3285"/>
<dbReference type="EnsemblBacteria" id="AAO78391">
    <property type="protein sequence ID" value="AAO78391"/>
    <property type="gene ID" value="BT_3285"/>
</dbReference>
<dbReference type="GeneID" id="60924465"/>
<dbReference type="KEGG" id="bth:BT_3285"/>
<dbReference type="PATRIC" id="fig|226186.12.peg.3352"/>
<dbReference type="eggNOG" id="COG2255">
    <property type="taxonomic scope" value="Bacteria"/>
</dbReference>
<dbReference type="HOGENOM" id="CLU_055599_1_0_10"/>
<dbReference type="InParanoid" id="Q8A2M0"/>
<dbReference type="OrthoDB" id="9804478at2"/>
<dbReference type="Proteomes" id="UP000001414">
    <property type="component" value="Chromosome"/>
</dbReference>
<dbReference type="GO" id="GO:0005737">
    <property type="term" value="C:cytoplasm"/>
    <property type="evidence" value="ECO:0007669"/>
    <property type="project" value="UniProtKB-SubCell"/>
</dbReference>
<dbReference type="GO" id="GO:0048476">
    <property type="term" value="C:Holliday junction resolvase complex"/>
    <property type="evidence" value="ECO:0007669"/>
    <property type="project" value="UniProtKB-UniRule"/>
</dbReference>
<dbReference type="GO" id="GO:0005524">
    <property type="term" value="F:ATP binding"/>
    <property type="evidence" value="ECO:0007669"/>
    <property type="project" value="UniProtKB-UniRule"/>
</dbReference>
<dbReference type="GO" id="GO:0016887">
    <property type="term" value="F:ATP hydrolysis activity"/>
    <property type="evidence" value="ECO:0007669"/>
    <property type="project" value="InterPro"/>
</dbReference>
<dbReference type="GO" id="GO:0000400">
    <property type="term" value="F:four-way junction DNA binding"/>
    <property type="evidence" value="ECO:0007669"/>
    <property type="project" value="UniProtKB-UniRule"/>
</dbReference>
<dbReference type="GO" id="GO:0009378">
    <property type="term" value="F:four-way junction helicase activity"/>
    <property type="evidence" value="ECO:0007669"/>
    <property type="project" value="InterPro"/>
</dbReference>
<dbReference type="GO" id="GO:0006310">
    <property type="term" value="P:DNA recombination"/>
    <property type="evidence" value="ECO:0007669"/>
    <property type="project" value="UniProtKB-UniRule"/>
</dbReference>
<dbReference type="GO" id="GO:0006281">
    <property type="term" value="P:DNA repair"/>
    <property type="evidence" value="ECO:0007669"/>
    <property type="project" value="UniProtKB-UniRule"/>
</dbReference>
<dbReference type="CDD" id="cd00009">
    <property type="entry name" value="AAA"/>
    <property type="match status" value="1"/>
</dbReference>
<dbReference type="Gene3D" id="1.10.8.60">
    <property type="match status" value="1"/>
</dbReference>
<dbReference type="Gene3D" id="3.40.50.300">
    <property type="entry name" value="P-loop containing nucleotide triphosphate hydrolases"/>
    <property type="match status" value="1"/>
</dbReference>
<dbReference type="Gene3D" id="1.10.10.10">
    <property type="entry name" value="Winged helix-like DNA-binding domain superfamily/Winged helix DNA-binding domain"/>
    <property type="match status" value="1"/>
</dbReference>
<dbReference type="HAMAP" id="MF_00016">
    <property type="entry name" value="DNA_HJ_migration_RuvB"/>
    <property type="match status" value="1"/>
</dbReference>
<dbReference type="InterPro" id="IPR003593">
    <property type="entry name" value="AAA+_ATPase"/>
</dbReference>
<dbReference type="InterPro" id="IPR041445">
    <property type="entry name" value="AAA_lid_4"/>
</dbReference>
<dbReference type="InterPro" id="IPR004605">
    <property type="entry name" value="DNA_helicase_Holl-junc_RuvB"/>
</dbReference>
<dbReference type="InterPro" id="IPR027417">
    <property type="entry name" value="P-loop_NTPase"/>
</dbReference>
<dbReference type="InterPro" id="IPR008824">
    <property type="entry name" value="RuvB-like_N"/>
</dbReference>
<dbReference type="InterPro" id="IPR008823">
    <property type="entry name" value="RuvB_C"/>
</dbReference>
<dbReference type="InterPro" id="IPR036388">
    <property type="entry name" value="WH-like_DNA-bd_sf"/>
</dbReference>
<dbReference type="InterPro" id="IPR036390">
    <property type="entry name" value="WH_DNA-bd_sf"/>
</dbReference>
<dbReference type="NCBIfam" id="NF000868">
    <property type="entry name" value="PRK00080.1"/>
    <property type="match status" value="1"/>
</dbReference>
<dbReference type="NCBIfam" id="TIGR00635">
    <property type="entry name" value="ruvB"/>
    <property type="match status" value="1"/>
</dbReference>
<dbReference type="PANTHER" id="PTHR42848">
    <property type="match status" value="1"/>
</dbReference>
<dbReference type="PANTHER" id="PTHR42848:SF1">
    <property type="entry name" value="HOLLIDAY JUNCTION BRANCH MIGRATION COMPLEX SUBUNIT RUVB"/>
    <property type="match status" value="1"/>
</dbReference>
<dbReference type="Pfam" id="PF17864">
    <property type="entry name" value="AAA_lid_4"/>
    <property type="match status" value="1"/>
</dbReference>
<dbReference type="Pfam" id="PF05491">
    <property type="entry name" value="RuvB_C"/>
    <property type="match status" value="1"/>
</dbReference>
<dbReference type="Pfam" id="PF05496">
    <property type="entry name" value="RuvB_N"/>
    <property type="match status" value="1"/>
</dbReference>
<dbReference type="SMART" id="SM00382">
    <property type="entry name" value="AAA"/>
    <property type="match status" value="1"/>
</dbReference>
<dbReference type="SUPFAM" id="SSF52540">
    <property type="entry name" value="P-loop containing nucleoside triphosphate hydrolases"/>
    <property type="match status" value="1"/>
</dbReference>
<dbReference type="SUPFAM" id="SSF46785">
    <property type="entry name" value="Winged helix' DNA-binding domain"/>
    <property type="match status" value="1"/>
</dbReference>
<organism>
    <name type="scientific">Bacteroides thetaiotaomicron (strain ATCC 29148 / DSM 2079 / JCM 5827 / CCUG 10774 / NCTC 10582 / VPI-5482 / E50)</name>
    <dbReference type="NCBI Taxonomy" id="226186"/>
    <lineage>
        <taxon>Bacteria</taxon>
        <taxon>Pseudomonadati</taxon>
        <taxon>Bacteroidota</taxon>
        <taxon>Bacteroidia</taxon>
        <taxon>Bacteroidales</taxon>
        <taxon>Bacteroidaceae</taxon>
        <taxon>Bacteroides</taxon>
    </lineage>
</organism>
<protein>
    <recommendedName>
        <fullName evidence="1">Holliday junction branch migration complex subunit RuvB</fullName>
        <ecNumber evidence="1">3.6.4.-</ecNumber>
    </recommendedName>
</protein>